<reference key="1">
    <citation type="journal article" date="2008" name="J. Bacteriol.">
        <title>Genome sequence of the streptomycin-producing microorganism Streptomyces griseus IFO 13350.</title>
        <authorList>
            <person name="Ohnishi Y."/>
            <person name="Ishikawa J."/>
            <person name="Hara H."/>
            <person name="Suzuki H."/>
            <person name="Ikenoya M."/>
            <person name="Ikeda H."/>
            <person name="Yamashita A."/>
            <person name="Hattori M."/>
            <person name="Horinouchi S."/>
        </authorList>
    </citation>
    <scope>NUCLEOTIDE SEQUENCE [LARGE SCALE GENOMIC DNA]</scope>
    <source>
        <strain>JCM 4626 / CBS 651.72 / NBRC 13350 / KCC S-0626 / ISP 5235</strain>
    </source>
</reference>
<sequence length="637" mass="68195">MDLLTRIKGPRDLDRLSLGELDQLAQEIRTFLVDAVSKTGGHLGPNLGVVELTIALHRVFESPRDKVLWDTGHQSYVHKLLTGRQDFSRLKSKGGLSGYPSRAESDHDVIENSHASGVLGWADGMAKANEVLRKDDHVVAVIGDGALTGGMAWEALNNIAAAKDRPLVIVVNDNERSYAPTIGGLANHLATLRTTDGYERFLARGKDILERTPVVGRPLYETLHGAKKGLKDFIAPQGMFEDLGLKYVGPIDGHDIEALESALQRAKRFRGPVIVHCLTEKGRGYTPALEDEADRFHAVGKIHPDTGLPISTSGLDWTSVFGEEMVKLGEEREDIVAITAAMLQPVGLGKFEAAFPDRIYDVGIAEQHGAASAAGLATGGLHPVFAVYATFLNRAFDQVLMDVALHKCGVTFVLDRAGITGTDGASHNGMWDMSILQCVPTLRIAAPRDADQVRAQLREAVAVDDAPTVVRFSKGAVGPAVKAVGRAGGMDILRRPTAARPDVLIVSVGALAPMCLEIADLLDAQGISSTVVDPRWVKPVDEALAPLAERHRVVVTVEDNSRAGGVGSAVAQSLRDAGVDVPLRDFGIPPVFLDHASRGEVMAEIGLTAPDIARQVTGLVAKLDGRFESRAVEPARD</sequence>
<evidence type="ECO:0000255" key="1">
    <source>
        <dbReference type="HAMAP-Rule" id="MF_00315"/>
    </source>
</evidence>
<comment type="function">
    <text evidence="1">Catalyzes the acyloin condensation reaction between C atoms 2 and 3 of pyruvate and glyceraldehyde 3-phosphate to yield 1-deoxy-D-xylulose-5-phosphate (DXP).</text>
</comment>
<comment type="catalytic activity">
    <reaction evidence="1">
        <text>D-glyceraldehyde 3-phosphate + pyruvate + H(+) = 1-deoxy-D-xylulose 5-phosphate + CO2</text>
        <dbReference type="Rhea" id="RHEA:12605"/>
        <dbReference type="ChEBI" id="CHEBI:15361"/>
        <dbReference type="ChEBI" id="CHEBI:15378"/>
        <dbReference type="ChEBI" id="CHEBI:16526"/>
        <dbReference type="ChEBI" id="CHEBI:57792"/>
        <dbReference type="ChEBI" id="CHEBI:59776"/>
        <dbReference type="EC" id="2.2.1.7"/>
    </reaction>
</comment>
<comment type="cofactor">
    <cofactor evidence="1">
        <name>Mg(2+)</name>
        <dbReference type="ChEBI" id="CHEBI:18420"/>
    </cofactor>
    <text evidence="1">Binds 1 Mg(2+) ion per subunit.</text>
</comment>
<comment type="cofactor">
    <cofactor evidence="1">
        <name>thiamine diphosphate</name>
        <dbReference type="ChEBI" id="CHEBI:58937"/>
    </cofactor>
    <text evidence="1">Binds 1 thiamine pyrophosphate per subunit.</text>
</comment>
<comment type="pathway">
    <text evidence="1">Metabolic intermediate biosynthesis; 1-deoxy-D-xylulose 5-phosphate biosynthesis; 1-deoxy-D-xylulose 5-phosphate from D-glyceraldehyde 3-phosphate and pyruvate: step 1/1.</text>
</comment>
<comment type="subunit">
    <text evidence="1">Homodimer.</text>
</comment>
<comment type="similarity">
    <text evidence="1">Belongs to the transketolase family. DXPS subfamily.</text>
</comment>
<name>DXS_STRGG</name>
<proteinExistence type="inferred from homology"/>
<organism>
    <name type="scientific">Streptomyces griseus subsp. griseus (strain JCM 4626 / CBS 651.72 / NBRC 13350 / KCC S-0626 / ISP 5235)</name>
    <dbReference type="NCBI Taxonomy" id="455632"/>
    <lineage>
        <taxon>Bacteria</taxon>
        <taxon>Bacillati</taxon>
        <taxon>Actinomycetota</taxon>
        <taxon>Actinomycetes</taxon>
        <taxon>Kitasatosporales</taxon>
        <taxon>Streptomycetaceae</taxon>
        <taxon>Streptomyces</taxon>
    </lineage>
</organism>
<accession>B1VWJ8</accession>
<gene>
    <name evidence="1" type="primary">dxs</name>
    <name type="ordered locus">SGR_1495</name>
</gene>
<dbReference type="EC" id="2.2.1.7" evidence="1"/>
<dbReference type="EMBL" id="AP009493">
    <property type="protein sequence ID" value="BAG18324.1"/>
    <property type="molecule type" value="Genomic_DNA"/>
</dbReference>
<dbReference type="RefSeq" id="WP_012378576.1">
    <property type="nucleotide sequence ID" value="NC_010572.1"/>
</dbReference>
<dbReference type="SMR" id="B1VWJ8"/>
<dbReference type="KEGG" id="sgr:SGR_1495"/>
<dbReference type="PATRIC" id="fig|455632.4.peg.1509"/>
<dbReference type="eggNOG" id="COG1154">
    <property type="taxonomic scope" value="Bacteria"/>
</dbReference>
<dbReference type="HOGENOM" id="CLU_009227_1_4_11"/>
<dbReference type="UniPathway" id="UPA00064">
    <property type="reaction ID" value="UER00091"/>
</dbReference>
<dbReference type="Proteomes" id="UP000001685">
    <property type="component" value="Chromosome"/>
</dbReference>
<dbReference type="GO" id="GO:0005829">
    <property type="term" value="C:cytosol"/>
    <property type="evidence" value="ECO:0007669"/>
    <property type="project" value="TreeGrafter"/>
</dbReference>
<dbReference type="GO" id="GO:0008661">
    <property type="term" value="F:1-deoxy-D-xylulose-5-phosphate synthase activity"/>
    <property type="evidence" value="ECO:0007669"/>
    <property type="project" value="UniProtKB-UniRule"/>
</dbReference>
<dbReference type="GO" id="GO:0000287">
    <property type="term" value="F:magnesium ion binding"/>
    <property type="evidence" value="ECO:0007669"/>
    <property type="project" value="UniProtKB-UniRule"/>
</dbReference>
<dbReference type="GO" id="GO:0030976">
    <property type="term" value="F:thiamine pyrophosphate binding"/>
    <property type="evidence" value="ECO:0007669"/>
    <property type="project" value="UniProtKB-UniRule"/>
</dbReference>
<dbReference type="GO" id="GO:0052865">
    <property type="term" value="P:1-deoxy-D-xylulose 5-phosphate biosynthetic process"/>
    <property type="evidence" value="ECO:0007669"/>
    <property type="project" value="UniProtKB-UniPathway"/>
</dbReference>
<dbReference type="GO" id="GO:0019288">
    <property type="term" value="P:isopentenyl diphosphate biosynthetic process, methylerythritol 4-phosphate pathway"/>
    <property type="evidence" value="ECO:0007669"/>
    <property type="project" value="TreeGrafter"/>
</dbReference>
<dbReference type="GO" id="GO:0016114">
    <property type="term" value="P:terpenoid biosynthetic process"/>
    <property type="evidence" value="ECO:0007669"/>
    <property type="project" value="UniProtKB-UniRule"/>
</dbReference>
<dbReference type="GO" id="GO:0009228">
    <property type="term" value="P:thiamine biosynthetic process"/>
    <property type="evidence" value="ECO:0007669"/>
    <property type="project" value="UniProtKB-UniRule"/>
</dbReference>
<dbReference type="CDD" id="cd02007">
    <property type="entry name" value="TPP_DXS"/>
    <property type="match status" value="1"/>
</dbReference>
<dbReference type="CDD" id="cd07033">
    <property type="entry name" value="TPP_PYR_DXS_TK_like"/>
    <property type="match status" value="1"/>
</dbReference>
<dbReference type="FunFam" id="3.40.50.920:FF:000002">
    <property type="entry name" value="1-deoxy-D-xylulose-5-phosphate synthase"/>
    <property type="match status" value="1"/>
</dbReference>
<dbReference type="FunFam" id="3.40.50.970:FF:000005">
    <property type="entry name" value="1-deoxy-D-xylulose-5-phosphate synthase"/>
    <property type="match status" value="1"/>
</dbReference>
<dbReference type="Gene3D" id="3.40.50.920">
    <property type="match status" value="1"/>
</dbReference>
<dbReference type="Gene3D" id="3.40.50.970">
    <property type="match status" value="2"/>
</dbReference>
<dbReference type="HAMAP" id="MF_00315">
    <property type="entry name" value="DXP_synth"/>
    <property type="match status" value="1"/>
</dbReference>
<dbReference type="InterPro" id="IPR005477">
    <property type="entry name" value="Dxylulose-5-P_synthase"/>
</dbReference>
<dbReference type="InterPro" id="IPR029061">
    <property type="entry name" value="THDP-binding"/>
</dbReference>
<dbReference type="InterPro" id="IPR009014">
    <property type="entry name" value="Transketo_C/PFOR_II"/>
</dbReference>
<dbReference type="InterPro" id="IPR005475">
    <property type="entry name" value="Transketolase-like_Pyr-bd"/>
</dbReference>
<dbReference type="InterPro" id="IPR020826">
    <property type="entry name" value="Transketolase_BS"/>
</dbReference>
<dbReference type="InterPro" id="IPR033248">
    <property type="entry name" value="Transketolase_C"/>
</dbReference>
<dbReference type="InterPro" id="IPR049557">
    <property type="entry name" value="Transketolase_CS"/>
</dbReference>
<dbReference type="NCBIfam" id="TIGR00204">
    <property type="entry name" value="dxs"/>
    <property type="match status" value="1"/>
</dbReference>
<dbReference type="NCBIfam" id="NF003933">
    <property type="entry name" value="PRK05444.2-2"/>
    <property type="match status" value="1"/>
</dbReference>
<dbReference type="PANTHER" id="PTHR43322">
    <property type="entry name" value="1-D-DEOXYXYLULOSE 5-PHOSPHATE SYNTHASE-RELATED"/>
    <property type="match status" value="1"/>
</dbReference>
<dbReference type="PANTHER" id="PTHR43322:SF5">
    <property type="entry name" value="1-DEOXY-D-XYLULOSE-5-PHOSPHATE SYNTHASE, CHLOROPLASTIC"/>
    <property type="match status" value="1"/>
</dbReference>
<dbReference type="Pfam" id="PF13292">
    <property type="entry name" value="DXP_synthase_N"/>
    <property type="match status" value="1"/>
</dbReference>
<dbReference type="Pfam" id="PF02779">
    <property type="entry name" value="Transket_pyr"/>
    <property type="match status" value="1"/>
</dbReference>
<dbReference type="Pfam" id="PF02780">
    <property type="entry name" value="Transketolase_C"/>
    <property type="match status" value="1"/>
</dbReference>
<dbReference type="SMART" id="SM00861">
    <property type="entry name" value="Transket_pyr"/>
    <property type="match status" value="1"/>
</dbReference>
<dbReference type="SUPFAM" id="SSF52518">
    <property type="entry name" value="Thiamin diphosphate-binding fold (THDP-binding)"/>
    <property type="match status" value="2"/>
</dbReference>
<dbReference type="SUPFAM" id="SSF52922">
    <property type="entry name" value="TK C-terminal domain-like"/>
    <property type="match status" value="1"/>
</dbReference>
<dbReference type="PROSITE" id="PS00801">
    <property type="entry name" value="TRANSKETOLASE_1"/>
    <property type="match status" value="1"/>
</dbReference>
<dbReference type="PROSITE" id="PS00802">
    <property type="entry name" value="TRANSKETOLASE_2"/>
    <property type="match status" value="1"/>
</dbReference>
<feature type="chain" id="PRO_1000115774" description="1-deoxy-D-xylulose-5-phosphate synthase">
    <location>
        <begin position="1"/>
        <end position="637"/>
    </location>
</feature>
<feature type="binding site" evidence="1">
    <location>
        <position position="73"/>
    </location>
    <ligand>
        <name>thiamine diphosphate</name>
        <dbReference type="ChEBI" id="CHEBI:58937"/>
    </ligand>
</feature>
<feature type="binding site" evidence="1">
    <location>
        <begin position="113"/>
        <end position="115"/>
    </location>
    <ligand>
        <name>thiamine diphosphate</name>
        <dbReference type="ChEBI" id="CHEBI:58937"/>
    </ligand>
</feature>
<feature type="binding site" evidence="1">
    <location>
        <position position="144"/>
    </location>
    <ligand>
        <name>Mg(2+)</name>
        <dbReference type="ChEBI" id="CHEBI:18420"/>
    </ligand>
</feature>
<feature type="binding site" evidence="1">
    <location>
        <begin position="145"/>
        <end position="146"/>
    </location>
    <ligand>
        <name>thiamine diphosphate</name>
        <dbReference type="ChEBI" id="CHEBI:58937"/>
    </ligand>
</feature>
<feature type="binding site" evidence="1">
    <location>
        <position position="174"/>
    </location>
    <ligand>
        <name>Mg(2+)</name>
        <dbReference type="ChEBI" id="CHEBI:18420"/>
    </ligand>
</feature>
<feature type="binding site" evidence="1">
    <location>
        <position position="174"/>
    </location>
    <ligand>
        <name>thiamine diphosphate</name>
        <dbReference type="ChEBI" id="CHEBI:58937"/>
    </ligand>
</feature>
<feature type="binding site" evidence="1">
    <location>
        <position position="285"/>
    </location>
    <ligand>
        <name>thiamine diphosphate</name>
        <dbReference type="ChEBI" id="CHEBI:58937"/>
    </ligand>
</feature>
<feature type="binding site" evidence="1">
    <location>
        <position position="366"/>
    </location>
    <ligand>
        <name>thiamine diphosphate</name>
        <dbReference type="ChEBI" id="CHEBI:58937"/>
    </ligand>
</feature>
<keyword id="KW-0414">Isoprene biosynthesis</keyword>
<keyword id="KW-0460">Magnesium</keyword>
<keyword id="KW-0479">Metal-binding</keyword>
<keyword id="KW-0784">Thiamine biosynthesis</keyword>
<keyword id="KW-0786">Thiamine pyrophosphate</keyword>
<keyword id="KW-0808">Transferase</keyword>
<protein>
    <recommendedName>
        <fullName evidence="1">1-deoxy-D-xylulose-5-phosphate synthase</fullName>
        <ecNumber evidence="1">2.2.1.7</ecNumber>
    </recommendedName>
    <alternativeName>
        <fullName evidence="1">1-deoxyxylulose-5-phosphate synthase</fullName>
        <shortName evidence="1">DXP synthase</shortName>
        <shortName evidence="1">DXPS</shortName>
    </alternativeName>
</protein>